<proteinExistence type="evidence at transcript level"/>
<evidence type="ECO:0000250" key="1"/>
<evidence type="ECO:0000250" key="2">
    <source>
        <dbReference type="UniProtKB" id="Q9NZV1"/>
    </source>
</evidence>
<evidence type="ECO:0000255" key="3"/>
<evidence type="ECO:0000255" key="4">
    <source>
        <dbReference type="PROSITE-ProRule" id="PRU00220"/>
    </source>
</evidence>
<evidence type="ECO:0000255" key="5">
    <source>
        <dbReference type="PROSITE-ProRule" id="PRU00582"/>
    </source>
</evidence>
<evidence type="ECO:0000255" key="6">
    <source>
        <dbReference type="PROSITE-ProRule" id="PRU00653"/>
    </source>
</evidence>
<evidence type="ECO:0000269" key="7">
    <source>
    </source>
</evidence>
<evidence type="ECO:0000269" key="8">
    <source>
    </source>
</evidence>
<evidence type="ECO:0000269" key="9">
    <source>
    </source>
</evidence>
<name>CRIM1_MOUSE</name>
<gene>
    <name type="primary">Crim1</name>
</gene>
<protein>
    <recommendedName>
        <fullName>Cysteine-rich motor neuron 1 protein</fullName>
        <shortName>CRIM-1</shortName>
    </recommendedName>
</protein>
<dbReference type="EMBL" id="BC100348">
    <property type="protein sequence ID" value="AAI00349.1"/>
    <property type="molecule type" value="mRNA"/>
</dbReference>
<dbReference type="EMBL" id="AF168680">
    <property type="protein sequence ID" value="AAF34410.1"/>
    <property type="molecule type" value="mRNA"/>
</dbReference>
<dbReference type="CCDS" id="CCDS28976.1"/>
<dbReference type="RefSeq" id="NP_056615.1">
    <property type="nucleotide sequence ID" value="NM_015800.3"/>
</dbReference>
<dbReference type="SMR" id="Q9JLL0"/>
<dbReference type="FunCoup" id="Q9JLL0">
    <property type="interactions" value="960"/>
</dbReference>
<dbReference type="STRING" id="10090.ENSMUSP00000108117"/>
<dbReference type="GlyConnect" id="2246">
    <property type="glycosylation" value="1 N-Linked glycan (1 site)"/>
</dbReference>
<dbReference type="GlyCosmos" id="Q9JLL0">
    <property type="glycosylation" value="2 sites, 1 glycan"/>
</dbReference>
<dbReference type="GlyGen" id="Q9JLL0">
    <property type="glycosylation" value="5 sites, 3 N-linked glycans (2 sites)"/>
</dbReference>
<dbReference type="iPTMnet" id="Q9JLL0"/>
<dbReference type="PhosphoSitePlus" id="Q9JLL0"/>
<dbReference type="PaxDb" id="10090-ENSMUSP00000108117"/>
<dbReference type="PeptideAtlas" id="Q9JLL0"/>
<dbReference type="ProteomicsDB" id="277895"/>
<dbReference type="Pumba" id="Q9JLL0"/>
<dbReference type="Antibodypedia" id="617">
    <property type="antibodies" value="168 antibodies from 28 providers"/>
</dbReference>
<dbReference type="Ensembl" id="ENSMUST00000112498.3">
    <property type="protein sequence ID" value="ENSMUSP00000108117.3"/>
    <property type="gene ID" value="ENSMUSG00000024074.9"/>
</dbReference>
<dbReference type="GeneID" id="50766"/>
<dbReference type="KEGG" id="mmu:50766"/>
<dbReference type="UCSC" id="uc008dou.2">
    <property type="organism name" value="mouse"/>
</dbReference>
<dbReference type="AGR" id="MGI:1354756"/>
<dbReference type="CTD" id="51232"/>
<dbReference type="MGI" id="MGI:1354756">
    <property type="gene designation" value="Crim1"/>
</dbReference>
<dbReference type="VEuPathDB" id="HostDB:ENSMUSG00000024074"/>
<dbReference type="eggNOG" id="KOG1216">
    <property type="taxonomic scope" value="Eukaryota"/>
</dbReference>
<dbReference type="GeneTree" id="ENSGT00940000160910"/>
<dbReference type="HOGENOM" id="CLU_008434_0_0_1"/>
<dbReference type="InParanoid" id="Q9JLL0"/>
<dbReference type="OMA" id="FNNVEYH"/>
<dbReference type="OrthoDB" id="5976811at2759"/>
<dbReference type="PhylomeDB" id="Q9JLL0"/>
<dbReference type="TreeFam" id="TF106451"/>
<dbReference type="BioGRID-ORCS" id="50766">
    <property type="hits" value="0 hits in 79 CRISPR screens"/>
</dbReference>
<dbReference type="ChiTaRS" id="Crim1">
    <property type="organism name" value="mouse"/>
</dbReference>
<dbReference type="PRO" id="PR:Q9JLL0"/>
<dbReference type="Proteomes" id="UP000000589">
    <property type="component" value="Chromosome 17"/>
</dbReference>
<dbReference type="RNAct" id="Q9JLL0">
    <property type="molecule type" value="protein"/>
</dbReference>
<dbReference type="Bgee" id="ENSMUSG00000024074">
    <property type="expression patterns" value="Expressed in pigmented layer of retina and 272 other cell types or tissues"/>
</dbReference>
<dbReference type="ExpressionAtlas" id="Q9JLL0">
    <property type="expression patterns" value="baseline and differential"/>
</dbReference>
<dbReference type="GO" id="GO:0005576">
    <property type="term" value="C:extracellular region"/>
    <property type="evidence" value="ECO:0007669"/>
    <property type="project" value="InterPro"/>
</dbReference>
<dbReference type="GO" id="GO:0016020">
    <property type="term" value="C:membrane"/>
    <property type="evidence" value="ECO:0007669"/>
    <property type="project" value="UniProtKB-SubCell"/>
</dbReference>
<dbReference type="GO" id="GO:0030165">
    <property type="term" value="F:PDZ domain binding"/>
    <property type="evidence" value="ECO:0000266"/>
    <property type="project" value="MGI"/>
</dbReference>
<dbReference type="GO" id="GO:0004867">
    <property type="term" value="F:serine-type endopeptidase inhibitor activity"/>
    <property type="evidence" value="ECO:0007669"/>
    <property type="project" value="InterPro"/>
</dbReference>
<dbReference type="GO" id="GO:0030514">
    <property type="term" value="P:negative regulation of BMP signaling pathway"/>
    <property type="evidence" value="ECO:0007669"/>
    <property type="project" value="Ensembl"/>
</dbReference>
<dbReference type="GO" id="GO:0045668">
    <property type="term" value="P:negative regulation of osteoblast differentiation"/>
    <property type="evidence" value="ECO:0007669"/>
    <property type="project" value="Ensembl"/>
</dbReference>
<dbReference type="FunFam" id="2.10.22.10:FF:000002">
    <property type="entry name" value="Cysteine rich transmembrane BMP regulator 1"/>
    <property type="match status" value="1"/>
</dbReference>
<dbReference type="FunFam" id="4.10.40.20:FF:000003">
    <property type="entry name" value="cysteine-rich motor neuron 1 protein isoform X1"/>
    <property type="match status" value="1"/>
</dbReference>
<dbReference type="FunFam" id="2.10.22.10:FF:000004">
    <property type="entry name" value="cysteine-rich motor neuron 1 protein isoform X2"/>
    <property type="match status" value="1"/>
</dbReference>
<dbReference type="FunFam" id="2.10.22.10:FF:000001">
    <property type="entry name" value="Cysteine-rich motor neuron 1 protein-like protein"/>
    <property type="match status" value="1"/>
</dbReference>
<dbReference type="Gene3D" id="4.10.40.20">
    <property type="match status" value="1"/>
</dbReference>
<dbReference type="Gene3D" id="6.20.200.20">
    <property type="match status" value="6"/>
</dbReference>
<dbReference type="Gene3D" id="2.10.22.10">
    <property type="entry name" value="Antistasin, domain 1"/>
    <property type="match status" value="4"/>
</dbReference>
<dbReference type="InterPro" id="IPR004094">
    <property type="entry name" value="Antistasin-like"/>
</dbReference>
<dbReference type="InterPro" id="IPR052624">
    <property type="entry name" value="CRIM1"/>
</dbReference>
<dbReference type="InterPro" id="IPR045813">
    <property type="entry name" value="CRIM1_C"/>
</dbReference>
<dbReference type="InterPro" id="IPR009030">
    <property type="entry name" value="Growth_fac_rcpt_cys_sf"/>
</dbReference>
<dbReference type="InterPro" id="IPR011061">
    <property type="entry name" value="Hirudin/antistatin"/>
</dbReference>
<dbReference type="InterPro" id="IPR000867">
    <property type="entry name" value="IGFBP-like"/>
</dbReference>
<dbReference type="InterPro" id="IPR001007">
    <property type="entry name" value="VWF_dom"/>
</dbReference>
<dbReference type="PANTHER" id="PTHR46439">
    <property type="entry name" value="CYSTEINE-RICH MOTOR NEURON 1 PROTEIN"/>
    <property type="match status" value="1"/>
</dbReference>
<dbReference type="PANTHER" id="PTHR46439:SF1">
    <property type="entry name" value="CYSTEINE-RICH MOTOR NEURON 1 PROTEIN"/>
    <property type="match status" value="1"/>
</dbReference>
<dbReference type="Pfam" id="PF02822">
    <property type="entry name" value="Antistasin"/>
    <property type="match status" value="4"/>
</dbReference>
<dbReference type="Pfam" id="PF19442">
    <property type="entry name" value="CRIM1_C"/>
    <property type="match status" value="1"/>
</dbReference>
<dbReference type="Pfam" id="PF00219">
    <property type="entry name" value="IGFBP"/>
    <property type="match status" value="1"/>
</dbReference>
<dbReference type="Pfam" id="PF00093">
    <property type="entry name" value="VWC"/>
    <property type="match status" value="6"/>
</dbReference>
<dbReference type="SMART" id="SM00121">
    <property type="entry name" value="IB"/>
    <property type="match status" value="1"/>
</dbReference>
<dbReference type="SMART" id="SM00214">
    <property type="entry name" value="VWC"/>
    <property type="match status" value="6"/>
</dbReference>
<dbReference type="SMART" id="SM00215">
    <property type="entry name" value="VWC_out"/>
    <property type="match status" value="4"/>
</dbReference>
<dbReference type="SUPFAM" id="SSF57603">
    <property type="entry name" value="FnI-like domain"/>
    <property type="match status" value="6"/>
</dbReference>
<dbReference type="SUPFAM" id="SSF57184">
    <property type="entry name" value="Growth factor receptor domain"/>
    <property type="match status" value="1"/>
</dbReference>
<dbReference type="SUPFAM" id="SSF57262">
    <property type="entry name" value="Leech antihemostatic proteins"/>
    <property type="match status" value="3"/>
</dbReference>
<dbReference type="PROSITE" id="PS51252">
    <property type="entry name" value="ANTISTASIN"/>
    <property type="match status" value="4"/>
</dbReference>
<dbReference type="PROSITE" id="PS51323">
    <property type="entry name" value="IGFBP_N_2"/>
    <property type="match status" value="1"/>
</dbReference>
<dbReference type="PROSITE" id="PS01208">
    <property type="entry name" value="VWFC_1"/>
    <property type="match status" value="6"/>
</dbReference>
<dbReference type="PROSITE" id="PS50184">
    <property type="entry name" value="VWFC_2"/>
    <property type="match status" value="6"/>
</dbReference>
<accession>Q9JLL0</accession>
<accession>Q497W4</accession>
<sequence length="1037" mass="114066">MYLVAGGRGLAGCGHLSVSLLGLLLLLARSGTRALVCLPCDESKCEEPRSCPGSIVQGVCGCCYMCARQRNESCGGAYGLHGACDRGLRCVIRPPLNGDSITEYEVGVCEDEDWDDDQLIGFEPCNENLISGCNIINGKCECGTIRTCNNPFEFPRKDMCLSALKRIEEEKPDCSKARCEVRFSPRCPEDSILIEGYAPPGECCPLPSRCVCDPAGCLRKVCQPGYLNILVSKASGKPGECCDLYECKPVFSVDCSTVECPPVQQAVCPLDSYETQVRLTADGCCTLPARCECLSGLCGFPVCEVGSTPRIVSRGDGTPGKCCDVFECVNETKPACVFNSVEYYDGDMFRMDNCRFCRCQGGVSICFTAQCGELNCERYYVPEGECCPVCEDPIYPLNNPAGCYANGQIRAHGDRWREDDCTFCQCINGEPHCVATACGQSCMHPVKVPGECCPVCEEPTYITIDPPACGELSNCSLKEKDCVYGFKLDHNGCRTCQCKIREELCLGLKRACTLDCPFGFLTDVHNCELCQCRPRPKKCRPTMCDKFCPLGFLKNKHGCDICRCKKCPELPCSKICPLGFQQDSHGCLICKCREVPPSAGPPVLSGTCLSMDGHHHKNEESWHDGCRECYCHNGKEMCALITCPVPACGNPTIRSGQCCPSCTDDFVVQKPELSTPSICHAPGGEYFVEGETWNIDSCTQCTCHSGRVLCETEVCPPLLCQNPSRTQDSCCPQCTDDPPQPSTSHNESVPSYCRNDEGDIFLAAESWKPDACTSCVCVDSAISCYSESCPSVACERPVLRKGQCCPYCLEDTIPKKVVCHFSGKTYADEERWDIDSCTHCYCLQGQTLCSTVSCPPLPCAEPIKVEGSCCPMCPEMYVPEPTNVPIEKKNHRGEIDLEVPMWPTPSENDIIHLPRDMGHLQVDYRDNNRLHPGEDSSLDSIVSVVVPIIICLSIIIAFLLINQKKQWVPLLCWYRTPTKPSSLNNQLVSVDCKKGTRVQVDGPQRMLRIAEPDARFSGFYSMQKQNHLQADNFYQTV</sequence>
<feature type="signal peptide" evidence="3">
    <location>
        <begin position="1"/>
        <end position="34"/>
    </location>
</feature>
<feature type="chain" id="PRO_0000021002" description="Cysteine-rich motor neuron 1 protein">
    <location>
        <begin position="35"/>
        <end position="1037"/>
    </location>
</feature>
<feature type="topological domain" description="Extracellular" evidence="3">
    <location>
        <begin position="35"/>
        <end position="940"/>
    </location>
</feature>
<feature type="transmembrane region" description="Helical" evidence="3">
    <location>
        <begin position="941"/>
        <end position="961"/>
    </location>
</feature>
<feature type="topological domain" description="Cytoplasmic" evidence="3">
    <location>
        <begin position="962"/>
        <end position="1037"/>
    </location>
</feature>
<feature type="domain" description="IGFBP N-terminal" evidence="6">
    <location>
        <begin position="35"/>
        <end position="112"/>
    </location>
</feature>
<feature type="domain" description="VWFC 1" evidence="4">
    <location>
        <begin position="334"/>
        <end position="391"/>
    </location>
</feature>
<feature type="domain" description="VWFC 2" evidence="4">
    <location>
        <begin position="401"/>
        <end position="457"/>
    </location>
</feature>
<feature type="domain" description="Antistasin-like 1" evidence="5">
    <location>
        <begin position="469"/>
        <end position="498"/>
    </location>
</feature>
<feature type="domain" description="Antistasin-like 2" evidence="5">
    <location>
        <begin position="505"/>
        <end position="532"/>
    </location>
</feature>
<feature type="domain" description="Antistasin-like 3" evidence="5">
    <location>
        <begin position="539"/>
        <end position="564"/>
    </location>
</feature>
<feature type="domain" description="Antistasin-like 4" evidence="5">
    <location>
        <begin position="567"/>
        <end position="592"/>
    </location>
</feature>
<feature type="domain" description="VWFC 3" evidence="4">
    <location>
        <begin position="606"/>
        <end position="663"/>
    </location>
</feature>
<feature type="domain" description="VWFC 4" evidence="4">
    <location>
        <begin position="677"/>
        <end position="735"/>
    </location>
</feature>
<feature type="domain" description="VWFC 5" evidence="4">
    <location>
        <begin position="751"/>
        <end position="809"/>
    </location>
</feature>
<feature type="domain" description="VWFC 6" evidence="4">
    <location>
        <begin position="817"/>
        <end position="874"/>
    </location>
</feature>
<feature type="short sequence motif" description="Cell attachment site" evidence="3">
    <location>
        <begin position="314"/>
        <end position="316"/>
    </location>
</feature>
<feature type="modified residue" description="Phosphothreonine" evidence="2">
    <location>
        <position position="1036"/>
    </location>
</feature>
<feature type="glycosylation site" description="N-linked (GlcNAc...) asparagine" evidence="3">
    <location>
        <position position="330"/>
    </location>
</feature>
<feature type="disulfide bond" evidence="6">
    <location>
        <begin position="37"/>
        <end position="60"/>
    </location>
</feature>
<feature type="disulfide bond" evidence="6">
    <location>
        <begin position="40"/>
        <end position="62"/>
    </location>
</feature>
<feature type="disulfide bond" evidence="6">
    <location>
        <begin position="45"/>
        <end position="63"/>
    </location>
</feature>
<feature type="disulfide bond" evidence="6">
    <location>
        <begin position="51"/>
        <end position="66"/>
    </location>
</feature>
<feature type="disulfide bond" evidence="6">
    <location>
        <begin position="74"/>
        <end position="90"/>
    </location>
</feature>
<feature type="disulfide bond" evidence="6">
    <location>
        <begin position="84"/>
        <end position="109"/>
    </location>
</feature>
<comment type="function">
    <text evidence="1">May play a role in CNS development by interacting with growth factors implicated in motor neuron differentiation and survival. May play a role in capillary formation and maintenance during angiogenesis. Modulates BMP activity by affecting its processing and delivery to the cell surface (By similarity).</text>
</comment>
<comment type="subunit">
    <text evidence="1">Interacts with BMP4 and BMP7.</text>
</comment>
<comment type="subcellular location">
    <subcellularLocation>
        <location evidence="1">Membrane</location>
        <topology evidence="1">Single-pass type I membrane protein</topology>
    </subcellularLocation>
</comment>
<comment type="tissue specificity">
    <text evidence="7 8 9">Expressed during embryonic development in brain, kidney, spinal cord, testis, lens, vibrissae, pinna, tooth primordia and in specific regions of the CNS. Expressed in adult lens. Displays male-specific expression in the fetal gonads with the strongest expression in the Sertoli cells of developing testis.</text>
</comment>
<comment type="developmental stage">
    <text evidence="7 9">Detected in embryo at 11.5 dpc to 17.7 dpc with a maximum between 12.5 and 13.5 dpc.</text>
</comment>
<keyword id="KW-1015">Disulfide bond</keyword>
<keyword id="KW-0325">Glycoprotein</keyword>
<keyword id="KW-0472">Membrane</keyword>
<keyword id="KW-0597">Phosphoprotein</keyword>
<keyword id="KW-1185">Reference proteome</keyword>
<keyword id="KW-0677">Repeat</keyword>
<keyword id="KW-0732">Signal</keyword>
<keyword id="KW-0812">Transmembrane</keyword>
<keyword id="KW-1133">Transmembrane helix</keyword>
<organism>
    <name type="scientific">Mus musculus</name>
    <name type="common">Mouse</name>
    <dbReference type="NCBI Taxonomy" id="10090"/>
    <lineage>
        <taxon>Eukaryota</taxon>
        <taxon>Metazoa</taxon>
        <taxon>Chordata</taxon>
        <taxon>Craniata</taxon>
        <taxon>Vertebrata</taxon>
        <taxon>Euteleostomi</taxon>
        <taxon>Mammalia</taxon>
        <taxon>Eutheria</taxon>
        <taxon>Euarchontoglires</taxon>
        <taxon>Glires</taxon>
        <taxon>Rodentia</taxon>
        <taxon>Myomorpha</taxon>
        <taxon>Muroidea</taxon>
        <taxon>Muridae</taxon>
        <taxon>Murinae</taxon>
        <taxon>Mus</taxon>
        <taxon>Mus</taxon>
    </lineage>
</organism>
<reference key="1">
    <citation type="journal article" date="2004" name="Genome Res.">
        <title>The status, quality, and expansion of the NIH full-length cDNA project: the Mammalian Gene Collection (MGC).</title>
        <authorList>
            <consortium name="The MGC Project Team"/>
        </authorList>
    </citation>
    <scope>NUCLEOTIDE SEQUENCE [LARGE SCALE MRNA]</scope>
    <source>
        <tissue>Placenta</tissue>
    </source>
</reference>
<reference key="2">
    <citation type="journal article" date="2000" name="Mech. Dev.">
        <title>CRIM1, a novel gene encoding a cysteine-rich repeat protein, is developmentally regulated and implicated in vertebrate CNS development and organogenesis.</title>
        <authorList>
            <person name="Kolle G.V."/>
            <person name="Georgas K."/>
            <person name="Holmes G.P."/>
            <person name="Little M.H."/>
            <person name="Yamada T."/>
        </authorList>
    </citation>
    <scope>NUCLEOTIDE SEQUENCE [MRNA] OF 10-1037</scope>
    <scope>TISSUE SPECIFICITY</scope>
    <scope>DEVELOPMENTAL STAGE</scope>
</reference>
<reference key="3">
    <citation type="journal article" date="2000" name="Dev. Dyn.">
        <title>Characterisation of Crim1 expression in the developing mouse urogenital tract reveals a sexually dimorphic gonadal expression pattern.</title>
        <authorList>
            <person name="Georgas K."/>
            <person name="Bowles J."/>
            <person name="Yamada T."/>
            <person name="Koopman P."/>
            <person name="Little M.H."/>
        </authorList>
    </citation>
    <scope>TISSUE SPECIFICITY</scope>
    <scope>DEVELOPMENTAL STAGE</scope>
</reference>
<reference key="4">
    <citation type="journal article" date="2000" name="Mech. Dev.">
        <title>Expression of Crim1 during murine ocular development.</title>
        <authorList>
            <person name="Lovicu F.J."/>
            <person name="Kolle G.V."/>
            <person name="Yamada T."/>
            <person name="Little M.H."/>
            <person name="McAvoy J.W."/>
        </authorList>
    </citation>
    <scope>TISSUE SPECIFICITY</scope>
</reference>